<proteinExistence type="inferred from homology"/>
<reference key="1">
    <citation type="journal article" date="2016" name="Proc. Natl. Acad. Sci. U.S.A.">
        <title>Biosynthetic investigation of phomopsins reveals a widespread pathway for ribosomal natural products in Ascomycetes.</title>
        <authorList>
            <person name="Ding W."/>
            <person name="Liu W.Q."/>
            <person name="Jia Y."/>
            <person name="Li Y."/>
            <person name="van der Donk W.A."/>
            <person name="Zhang Q."/>
        </authorList>
    </citation>
    <scope>NUCLEOTIDE SEQUENCE [GENOMIC DNA]</scope>
    <scope>FUNCTION</scope>
    <source>
        <strain>ATCC 26115 / IMI 115107 / C 1557</strain>
    </source>
</reference>
<reference key="2">
    <citation type="journal article" date="2021" name="Angew. Chem. Int. Ed.">
        <title>Biosynthetic studies of phomopsins unveil posttranslational installation of dehydroamino acids by ustYa family proteins.</title>
        <authorList>
            <person name="Sogahata K."/>
            <person name="Ozaki T."/>
            <person name="Igarashi Y."/>
            <person name="Naganuma Y."/>
            <person name="Liu C."/>
            <person name="Minami A."/>
            <person name="Oikawa H."/>
        </authorList>
    </citation>
    <scope>NOMENCLATURE</scope>
    <source>
        <strain>ATCC 26115 / IMI 115107 / C 1557</strain>
    </source>
</reference>
<evidence type="ECO:0000255" key="1"/>
<evidence type="ECO:0000255" key="2">
    <source>
        <dbReference type="PROSITE-ProRule" id="PRU00498"/>
    </source>
</evidence>
<evidence type="ECO:0000256" key="3">
    <source>
        <dbReference type="SAM" id="MobiDB-lite"/>
    </source>
</evidence>
<evidence type="ECO:0000269" key="4">
    <source>
    </source>
</evidence>
<evidence type="ECO:0000303" key="5">
    <source>
    </source>
</evidence>
<evidence type="ECO:0000303" key="6">
    <source>
    </source>
</evidence>
<evidence type="ECO:0000305" key="7">
    <source>
    </source>
</evidence>
<feature type="chain" id="PRO_0000458401" description="Phomopsin biosynthesis cluster protein B'">
    <location>
        <begin position="1"/>
        <end position="342"/>
    </location>
</feature>
<feature type="transmembrane region" description="Helical" evidence="1">
    <location>
        <begin position="87"/>
        <end position="107"/>
    </location>
</feature>
<feature type="region of interest" description="Disordered" evidence="3">
    <location>
        <begin position="1"/>
        <end position="22"/>
    </location>
</feature>
<feature type="region of interest" description="Disordered" evidence="3">
    <location>
        <begin position="118"/>
        <end position="186"/>
    </location>
</feature>
<feature type="compositionally biased region" description="Low complexity" evidence="3">
    <location>
        <begin position="144"/>
        <end position="155"/>
    </location>
</feature>
<feature type="glycosylation site" description="N-linked (GlcNAc...) asparagine" evidence="2">
    <location>
        <position position="248"/>
    </location>
</feature>
<name>PHOB2_DIALO</name>
<keyword id="KW-0325">Glycoprotein</keyword>
<keyword id="KW-0472">Membrane</keyword>
<keyword id="KW-0812">Transmembrane</keyword>
<keyword id="KW-1133">Transmembrane helix</keyword>
<keyword id="KW-0843">Virulence</keyword>
<organism>
    <name type="scientific">Diaporthe leptostromiformis</name>
    <name type="common">Lupinosis disease fungus</name>
    <name type="synonym">Phomopsis leptostromiformis</name>
    <dbReference type="NCBI Taxonomy" id="291059"/>
    <lineage>
        <taxon>Eukaryota</taxon>
        <taxon>Fungi</taxon>
        <taxon>Dikarya</taxon>
        <taxon>Ascomycota</taxon>
        <taxon>Pezizomycotina</taxon>
        <taxon>Sordariomycetes</taxon>
        <taxon>Sordariomycetidae</taxon>
        <taxon>Diaporthales</taxon>
        <taxon>Diaporthaceae</taxon>
        <taxon>Diaporthe</taxon>
    </lineage>
</organism>
<comment type="function">
    <text evidence="4 7">Part of the gene cluster that mediates the biosynthesis of the phomopsins, a group of hexapeptide mycotoxins which infects lupins and causes lupinosis disease in livestock (PubMed:34608734). The role of phomB' within the phomopsins biosynthesis pathway has still to be determined (Probable). The pathway starts with the processing of the precursor phomA by several endopeptidases including kexin proteases as well as the cluster-specific S41 family peptidase phomP1 and the oligopeptidase phomG to produce 10 identical copies of the hexapeptide Tyr-Val-Ile-Pro-Ile-Asp. After being excised from the precursor peptide, the core peptides are cyclized and modified post-translationally by enzymes encoded within the gene cluster. The timing and order of proteolysis of the phomA precursor and PTMs are still unknown. Two tyrosinase-like enzymes, phomQ1 and phomQ2, catalyze the chlorination and hydroxylation of Tyr, respectively. PhomYb, is proposed to be involved in the construction of the macrocyclic structure. The other 4 ustYa family proteins may be involved in PTMs that generate the unique structure of phomopsin A. PhomYa is required for the hydroxylation of C-beta of Tyr. PhomYc, phomYd, and phomYe are responsible for the biosynthesis of 2,3-dehydroisoleucine (dIle), 2,3-dehydroaspartic acid (dAsp), and 3,4-dehydroproline (dPro), respectively. While dIle formation by phomYc is indispensable for the installation of dAsp by phomYd, the order of the other PTMs have not been elucidated yet. Most of the biosynthetic enzymes likely have broad substrate specificity, and thus, there might be a metabolic grid from a precursor to phomopsin A. The enzyme(s) responsible for the biosynthesis of 3,4-dehydrovaline (dVal) have also not been identified yet. Finally, phomM acts as an S-adenosylmethionine-dependent alpha-N-methyltransferase that catalyzes two successive N-methylation reactions, converting N-desmethyl-phomopsin A to phomopsin A and phomopsin A further to an N,N-dimethylated congener called phomopsin E (Probable).</text>
</comment>
<comment type="subcellular location">
    <subcellularLocation>
        <location evidence="1">Membrane</location>
        <topology evidence="1">Single-pass membrane protein</topology>
    </subcellularLocation>
</comment>
<dbReference type="EMBL" id="KU645838">
    <property type="protein sequence ID" value="AMR44286.1"/>
    <property type="molecule type" value="Genomic_DNA"/>
</dbReference>
<dbReference type="GO" id="GO:0016020">
    <property type="term" value="C:membrane"/>
    <property type="evidence" value="ECO:0007669"/>
    <property type="project" value="UniProtKB-SubCell"/>
</dbReference>
<dbReference type="InterPro" id="IPR053008">
    <property type="entry name" value="Phomopsin_biosynth_assoc"/>
</dbReference>
<dbReference type="PANTHER" id="PTHR35896">
    <property type="entry name" value="IG-LIKE DOMAIN-CONTAINING PROTEIN"/>
    <property type="match status" value="1"/>
</dbReference>
<dbReference type="PANTHER" id="PTHR35896:SF3">
    <property type="entry name" value="MAJOR FACILITATOR SUPERFAMILY TRANSPORTER"/>
    <property type="match status" value="1"/>
</dbReference>
<gene>
    <name evidence="6" type="primary">PhomB'</name>
    <name evidence="5" type="synonym">PhomB</name>
</gene>
<protein>
    <recommendedName>
        <fullName evidence="6">Phomopsin biosynthesis cluster protein B'</fullName>
    </recommendedName>
</protein>
<accession>A0A142I734</accession>
<sequence length="342" mass="38241">MESIAKAKSLPNKGRTYDSQRPWNRDSPFSFAAWWSTPSTRYLKVDQPSGRDEHDSLDLEDEDVSNYLASHRERQKRRASCAAKAKVLIIGCAVISLFAIIGALGFALGRRATLPGSCASPAHQNPHTPPHPRPTKGEAHDAGHSGSHSSSSSTNNHHHSHDDSPPPPHVGIDKPKQCGESPDEAQSRGCIFEPQLTAWVAPECAFPAVVAEYQDAVGDMMTEWPWFWDTGLQKAVSPEEFPSLQAGNYSVVYTPYQASHALHCLYCWRKVSYALEHGVDWMDARCHQFYHQRHCAFFIADKLLEMEDWRAAAEVDVQGRLTTWTYPLLYHNCVPLSSTMES</sequence>